<name>HSDL2_RAT</name>
<reference key="1">
    <citation type="journal article" date="2004" name="Genome Res.">
        <title>The status, quality, and expansion of the NIH full-length cDNA project: the Mammalian Gene Collection (MGC).</title>
        <authorList>
            <consortium name="The MGC Project Team"/>
        </authorList>
    </citation>
    <scope>NUCLEOTIDE SEQUENCE [LARGE SCALE MRNA]</scope>
    <source>
        <tissue>Testis</tissue>
    </source>
</reference>
<accession>Q4V8F9</accession>
<dbReference type="EC" id="1.-.-.-"/>
<dbReference type="EMBL" id="BC097407">
    <property type="protein sequence ID" value="AAH97407.1"/>
    <property type="molecule type" value="mRNA"/>
</dbReference>
<dbReference type="RefSeq" id="NP_001020868.1">
    <property type="nucleotide sequence ID" value="NM_001025697.1"/>
</dbReference>
<dbReference type="SMR" id="Q4V8F9"/>
<dbReference type="BioGRID" id="260349">
    <property type="interactions" value="1"/>
</dbReference>
<dbReference type="FunCoup" id="Q4V8F9">
    <property type="interactions" value="2026"/>
</dbReference>
<dbReference type="STRING" id="10116.ENSRNOP00000056213"/>
<dbReference type="GlyGen" id="Q4V8F9">
    <property type="glycosylation" value="2 sites, 1 O-linked glycan (1 site)"/>
</dbReference>
<dbReference type="iPTMnet" id="Q4V8F9"/>
<dbReference type="PhosphoSitePlus" id="Q4V8F9"/>
<dbReference type="jPOST" id="Q4V8F9"/>
<dbReference type="PaxDb" id="10116-ENSRNOP00000056213"/>
<dbReference type="GeneID" id="313200"/>
<dbReference type="KEGG" id="rno:313200"/>
<dbReference type="AGR" id="RGD:1305387"/>
<dbReference type="CTD" id="84263"/>
<dbReference type="RGD" id="1305387">
    <property type="gene designation" value="Hsdl2"/>
</dbReference>
<dbReference type="VEuPathDB" id="HostDB:ENSRNOG00000016692"/>
<dbReference type="eggNOG" id="KOG0725">
    <property type="taxonomic scope" value="Eukaryota"/>
</dbReference>
<dbReference type="eggNOG" id="KOG4170">
    <property type="taxonomic scope" value="Eukaryota"/>
</dbReference>
<dbReference type="HOGENOM" id="CLU_010194_25_0_1"/>
<dbReference type="InParanoid" id="Q4V8F9"/>
<dbReference type="OrthoDB" id="62577at9989"/>
<dbReference type="PhylomeDB" id="Q4V8F9"/>
<dbReference type="PRO" id="PR:Q4V8F9"/>
<dbReference type="Proteomes" id="UP000002494">
    <property type="component" value="Chromosome 5"/>
</dbReference>
<dbReference type="Bgee" id="ENSRNOG00000016692">
    <property type="expression patterns" value="Expressed in heart and 19 other cell types or tissues"/>
</dbReference>
<dbReference type="GO" id="GO:0005739">
    <property type="term" value="C:mitochondrion"/>
    <property type="evidence" value="ECO:0000250"/>
    <property type="project" value="UniProtKB"/>
</dbReference>
<dbReference type="GO" id="GO:0005777">
    <property type="term" value="C:peroxisome"/>
    <property type="evidence" value="ECO:0000266"/>
    <property type="project" value="RGD"/>
</dbReference>
<dbReference type="GO" id="GO:0016491">
    <property type="term" value="F:oxidoreductase activity"/>
    <property type="evidence" value="ECO:0007669"/>
    <property type="project" value="UniProtKB-KW"/>
</dbReference>
<dbReference type="GO" id="GO:0042632">
    <property type="term" value="P:cholesterol homeostasis"/>
    <property type="evidence" value="ECO:0000266"/>
    <property type="project" value="RGD"/>
</dbReference>
<dbReference type="CDD" id="cd09762">
    <property type="entry name" value="HSDL2_SDR_c"/>
    <property type="match status" value="1"/>
</dbReference>
<dbReference type="FunFam" id="3.40.50.720:FF:000301">
    <property type="entry name" value="Hydroxysteroid dehydrogenase like 2"/>
    <property type="match status" value="1"/>
</dbReference>
<dbReference type="FunFam" id="3.30.1050.10:FF:000005">
    <property type="entry name" value="hydroxysteroid dehydrogenase-like protein 2 isoform X1"/>
    <property type="match status" value="1"/>
</dbReference>
<dbReference type="Gene3D" id="3.40.50.720">
    <property type="entry name" value="NAD(P)-binding Rossmann-like Domain"/>
    <property type="match status" value="1"/>
</dbReference>
<dbReference type="Gene3D" id="3.30.1050.10">
    <property type="entry name" value="SCP2 sterol-binding domain"/>
    <property type="match status" value="1"/>
</dbReference>
<dbReference type="InterPro" id="IPR051935">
    <property type="entry name" value="HSDL2"/>
</dbReference>
<dbReference type="InterPro" id="IPR036291">
    <property type="entry name" value="NAD(P)-bd_dom_sf"/>
</dbReference>
<dbReference type="InterPro" id="IPR003033">
    <property type="entry name" value="SCP2_sterol-bd_dom"/>
</dbReference>
<dbReference type="InterPro" id="IPR036527">
    <property type="entry name" value="SCP2_sterol-bd_dom_sf"/>
</dbReference>
<dbReference type="InterPro" id="IPR002347">
    <property type="entry name" value="SDR_fam"/>
</dbReference>
<dbReference type="NCBIfam" id="NF006133">
    <property type="entry name" value="PRK08278.1"/>
    <property type="match status" value="1"/>
</dbReference>
<dbReference type="PANTHER" id="PTHR42808">
    <property type="entry name" value="HYDROXYSTEROID DEHYDROGENASE-LIKE PROTEIN 2"/>
    <property type="match status" value="1"/>
</dbReference>
<dbReference type="PANTHER" id="PTHR42808:SF3">
    <property type="entry name" value="HYDROXYSTEROID DEHYDROGENASE-LIKE PROTEIN 2"/>
    <property type="match status" value="1"/>
</dbReference>
<dbReference type="Pfam" id="PF00106">
    <property type="entry name" value="adh_short"/>
    <property type="match status" value="1"/>
</dbReference>
<dbReference type="Pfam" id="PF02036">
    <property type="entry name" value="SCP2"/>
    <property type="match status" value="1"/>
</dbReference>
<dbReference type="PRINTS" id="PR00081">
    <property type="entry name" value="GDHRDH"/>
</dbReference>
<dbReference type="SUPFAM" id="SSF51735">
    <property type="entry name" value="NAD(P)-binding Rossmann-fold domains"/>
    <property type="match status" value="1"/>
</dbReference>
<dbReference type="SUPFAM" id="SSF55718">
    <property type="entry name" value="SCP-like"/>
    <property type="match status" value="1"/>
</dbReference>
<proteinExistence type="evidence at transcript level"/>
<organism>
    <name type="scientific">Rattus norvegicus</name>
    <name type="common">Rat</name>
    <dbReference type="NCBI Taxonomy" id="10116"/>
    <lineage>
        <taxon>Eukaryota</taxon>
        <taxon>Metazoa</taxon>
        <taxon>Chordata</taxon>
        <taxon>Craniata</taxon>
        <taxon>Vertebrata</taxon>
        <taxon>Euteleostomi</taxon>
        <taxon>Mammalia</taxon>
        <taxon>Eutheria</taxon>
        <taxon>Euarchontoglires</taxon>
        <taxon>Glires</taxon>
        <taxon>Rodentia</taxon>
        <taxon>Myomorpha</taxon>
        <taxon>Muroidea</taxon>
        <taxon>Muridae</taxon>
        <taxon>Murinae</taxon>
        <taxon>Rattus</taxon>
    </lineage>
</organism>
<evidence type="ECO:0000250" key="1">
    <source>
        <dbReference type="UniProtKB" id="Q2TPA8"/>
    </source>
</evidence>
<evidence type="ECO:0000250" key="2">
    <source>
        <dbReference type="UniProtKB" id="Q6YN16"/>
    </source>
</evidence>
<evidence type="ECO:0000255" key="3"/>
<evidence type="ECO:0000256" key="4">
    <source>
        <dbReference type="SAM" id="MobiDB-lite"/>
    </source>
</evidence>
<evidence type="ECO:0000305" key="5"/>
<gene>
    <name type="primary">Hsdl2</name>
</gene>
<keyword id="KW-0007">Acetylation</keyword>
<keyword id="KW-0379">Hydroxylation</keyword>
<keyword id="KW-0496">Mitochondrion</keyword>
<keyword id="KW-0521">NADP</keyword>
<keyword id="KW-0560">Oxidoreductase</keyword>
<keyword id="KW-0576">Peroxisome</keyword>
<keyword id="KW-1185">Reference proteome</keyword>
<feature type="chain" id="PRO_0000319891" description="Hydroxysteroid dehydrogenase-like protein 2">
    <location>
        <begin position="1"/>
        <end position="524"/>
    </location>
</feature>
<feature type="domain" description="SCP2">
    <location>
        <begin position="414"/>
        <end position="521"/>
    </location>
</feature>
<feature type="region of interest" description="Disordered" evidence="4">
    <location>
        <begin position="283"/>
        <end position="410"/>
    </location>
</feature>
<feature type="compositionally biased region" description="Basic and acidic residues" evidence="4">
    <location>
        <begin position="283"/>
        <end position="300"/>
    </location>
</feature>
<feature type="compositionally biased region" description="Low complexity" evidence="4">
    <location>
        <begin position="301"/>
        <end position="391"/>
    </location>
</feature>
<feature type="active site" description="Proton acceptor" evidence="3">
    <location>
        <position position="168"/>
    </location>
</feature>
<feature type="binding site" evidence="2">
    <location>
        <begin position="17"/>
        <end position="23"/>
    </location>
    <ligand>
        <name>NADP(+)</name>
        <dbReference type="ChEBI" id="CHEBI:58349"/>
    </ligand>
</feature>
<feature type="binding site" evidence="2">
    <location>
        <position position="42"/>
    </location>
    <ligand>
        <name>NADP(+)</name>
        <dbReference type="ChEBI" id="CHEBI:58349"/>
    </ligand>
</feature>
<feature type="binding site" evidence="2">
    <location>
        <position position="74"/>
    </location>
    <ligand>
        <name>NADP(+)</name>
        <dbReference type="ChEBI" id="CHEBI:58349"/>
    </ligand>
</feature>
<feature type="binding site" evidence="2">
    <location>
        <position position="172"/>
    </location>
    <ligand>
        <name>NADP(+)</name>
        <dbReference type="ChEBI" id="CHEBI:58349"/>
    </ligand>
</feature>
<feature type="modified residue" description="N6-(2-hydroxyisobutyryl)lysine" evidence="2">
    <location>
        <position position="42"/>
    </location>
</feature>
<feature type="modified residue" description="N6-acetyllysine" evidence="1">
    <location>
        <position position="116"/>
    </location>
</feature>
<feature type="modified residue" description="N6-succinyllysine" evidence="1">
    <location>
        <position position="424"/>
    </location>
</feature>
<comment type="function">
    <text evidence="2">Has apparently no steroid dehydrogenase activity. Controls bile acid (BA) and lipid metabolism in response to nutritional cues.</text>
</comment>
<comment type="subcellular location">
    <subcellularLocation>
        <location evidence="2">Peroxisome</location>
    </subcellularLocation>
    <subcellularLocation>
        <location evidence="2">Mitochondrion</location>
    </subcellularLocation>
</comment>
<comment type="similarity">
    <text evidence="5">Belongs to the short-chain dehydrogenases/reductases (SDR) family.</text>
</comment>
<sequence length="524" mass="58344">MLPNTGKLAGCTVFITGASRGIGKAIALKAAKDGANIVIAAKTTQRHPKLLGTIYTAAEEIEAAGGKALPCVVDVRDEQQINSAVEKAVERFGGIDILVNNASAISLTNTLETPTKRVDLMMSVNTRGTYLTSKACIPFLKKSKVAHILNLSPPLNLNPMWFKQHCAYTIAKYGMSMCVLGMAEEFRGEIAVNALWPRTAIHTAAMDMLGGAGVESQCRKVDIIADAAYSIFKRPKSFTGNFIIDENILKEEGIKDFDIYAITPGHPLLPDFFLDEHPDAVMEEKESYDPVPEVKEEKLQLQEQPQLQEQPQLQEKPQLQEQPQLQEKPQLQEQPQLQEQPQLQEQPQQQPQLQEQPQLQEKPQLQEQPQQQEKPQPQQQPQQQPQQRPQQRPQPQPQPQPLLQSVLPPKPHFGAVEETFRIVKDSLSDEVVRATQAVYQFELSGEDGGTWFLDLKSKGGKVGHGEPSDRADVVMSMATEDFVKMFSGKLKPTMAFMSGKLKIKGNIALAIKLEKLMTHMNSRL</sequence>
<protein>
    <recommendedName>
        <fullName>Hydroxysteroid dehydrogenase-like protein 2</fullName>
        <ecNumber>1.-.-.-</ecNumber>
    </recommendedName>
</protein>